<name>SPT5_SULAC</name>
<evidence type="ECO:0000255" key="1">
    <source>
        <dbReference type="HAMAP-Rule" id="MF_00950"/>
    </source>
</evidence>
<evidence type="ECO:0000305" key="2">
    <source>
    </source>
</evidence>
<protein>
    <recommendedName>
        <fullName evidence="1">Transcription elongation factor Spt5</fullName>
    </recommendedName>
</protein>
<gene>
    <name evidence="1" type="primary">spt5</name>
    <name type="synonym">nusG</name>
    <name type="ordered locus">Saci_1460</name>
</gene>
<organism>
    <name type="scientific">Sulfolobus acidocaldarius (strain ATCC 33909 / DSM 639 / JCM 8929 / NBRC 15157 / NCIMB 11770)</name>
    <dbReference type="NCBI Taxonomy" id="330779"/>
    <lineage>
        <taxon>Archaea</taxon>
        <taxon>Thermoproteota</taxon>
        <taxon>Thermoprotei</taxon>
        <taxon>Sulfolobales</taxon>
        <taxon>Sulfolobaceae</taxon>
        <taxon>Sulfolobus</taxon>
    </lineage>
</organism>
<proteinExistence type="inferred from homology"/>
<feature type="chain" id="PRO_0000113979" description="Transcription elongation factor Spt5">
    <location>
        <begin position="1"/>
        <end position="152"/>
    </location>
</feature>
<feature type="domain" description="KOW" evidence="1">
    <location>
        <begin position="99"/>
        <end position="129"/>
    </location>
</feature>
<dbReference type="EMBL" id="X58538">
    <property type="protein sequence ID" value="CAA41431.1"/>
    <property type="molecule type" value="Genomic_DNA"/>
</dbReference>
<dbReference type="EMBL" id="X77509">
    <property type="protein sequence ID" value="CAA54645.1"/>
    <property type="molecule type" value="Genomic_DNA"/>
</dbReference>
<dbReference type="EMBL" id="CP000077">
    <property type="protein sequence ID" value="AAY80781.1"/>
    <property type="molecule type" value="Genomic_DNA"/>
</dbReference>
<dbReference type="PIR" id="S53705">
    <property type="entry name" value="S53705"/>
</dbReference>
<dbReference type="RefSeq" id="WP_011278283.1">
    <property type="nucleotide sequence ID" value="NC_007181.1"/>
</dbReference>
<dbReference type="SMR" id="P27341"/>
<dbReference type="STRING" id="330779.Saci_1460"/>
<dbReference type="GeneID" id="14551955"/>
<dbReference type="KEGG" id="sai:Saci_1460"/>
<dbReference type="PATRIC" id="fig|330779.12.peg.1404"/>
<dbReference type="eggNOG" id="arCOG01920">
    <property type="taxonomic scope" value="Archaea"/>
</dbReference>
<dbReference type="HOGENOM" id="CLU_113589_0_0_2"/>
<dbReference type="Proteomes" id="UP000001018">
    <property type="component" value="Chromosome"/>
</dbReference>
<dbReference type="GO" id="GO:0005840">
    <property type="term" value="C:ribosome"/>
    <property type="evidence" value="ECO:0007669"/>
    <property type="project" value="InterPro"/>
</dbReference>
<dbReference type="GO" id="GO:0003735">
    <property type="term" value="F:structural constituent of ribosome"/>
    <property type="evidence" value="ECO:0007669"/>
    <property type="project" value="InterPro"/>
</dbReference>
<dbReference type="GO" id="GO:0003746">
    <property type="term" value="F:translation elongation factor activity"/>
    <property type="evidence" value="ECO:0007669"/>
    <property type="project" value="InterPro"/>
</dbReference>
<dbReference type="GO" id="GO:0006355">
    <property type="term" value="P:regulation of DNA-templated transcription"/>
    <property type="evidence" value="ECO:0007669"/>
    <property type="project" value="UniProtKB-UniRule"/>
</dbReference>
<dbReference type="GO" id="GO:0140673">
    <property type="term" value="P:transcription elongation-coupled chromatin remodeling"/>
    <property type="evidence" value="ECO:0007669"/>
    <property type="project" value="InterPro"/>
</dbReference>
<dbReference type="CDD" id="cd06091">
    <property type="entry name" value="KOW_NusG"/>
    <property type="match status" value="1"/>
</dbReference>
<dbReference type="CDD" id="cd09887">
    <property type="entry name" value="NGN_Arch"/>
    <property type="match status" value="1"/>
</dbReference>
<dbReference type="Gene3D" id="2.30.30.30">
    <property type="match status" value="1"/>
</dbReference>
<dbReference type="Gene3D" id="3.30.70.940">
    <property type="entry name" value="NusG, N-terminal domain"/>
    <property type="match status" value="1"/>
</dbReference>
<dbReference type="HAMAP" id="MF_00950">
    <property type="entry name" value="Spt5_arch"/>
    <property type="match status" value="1"/>
</dbReference>
<dbReference type="InterPro" id="IPR005824">
    <property type="entry name" value="KOW"/>
</dbReference>
<dbReference type="InterPro" id="IPR005100">
    <property type="entry name" value="NGN-domain"/>
</dbReference>
<dbReference type="InterPro" id="IPR006645">
    <property type="entry name" value="NGN-like_dom"/>
</dbReference>
<dbReference type="InterPro" id="IPR036735">
    <property type="entry name" value="NGN_dom_sf"/>
</dbReference>
<dbReference type="InterPro" id="IPR014722">
    <property type="entry name" value="Rib_uL2_dom2"/>
</dbReference>
<dbReference type="InterPro" id="IPR005825">
    <property type="entry name" value="Ribosomal_uL24_CS"/>
</dbReference>
<dbReference type="InterPro" id="IPR011590">
    <property type="entry name" value="Spt5_arc"/>
</dbReference>
<dbReference type="InterPro" id="IPR008991">
    <property type="entry name" value="Translation_prot_SH3-like_sf"/>
</dbReference>
<dbReference type="NCBIfam" id="TIGR00405">
    <property type="entry name" value="KOW_elon_Spt5"/>
    <property type="match status" value="1"/>
</dbReference>
<dbReference type="Pfam" id="PF00467">
    <property type="entry name" value="KOW"/>
    <property type="match status" value="1"/>
</dbReference>
<dbReference type="Pfam" id="PF03439">
    <property type="entry name" value="Spt5-NGN"/>
    <property type="match status" value="1"/>
</dbReference>
<dbReference type="SMART" id="SM00739">
    <property type="entry name" value="KOW"/>
    <property type="match status" value="1"/>
</dbReference>
<dbReference type="SMART" id="SM00738">
    <property type="entry name" value="NGN"/>
    <property type="match status" value="1"/>
</dbReference>
<dbReference type="SUPFAM" id="SSF50104">
    <property type="entry name" value="Translation proteins SH3-like domain"/>
    <property type="match status" value="1"/>
</dbReference>
<comment type="function">
    <text evidence="1">Stimulates transcription elongation.</text>
</comment>
<comment type="subunit">
    <text evidence="1">Heterodimer composed of Spt4 and Spt5. Interacts with RNA polymerase (RNAP).</text>
</comment>
<comment type="similarity">
    <text evidence="1">Belongs to the archaeal Spt5 family.</text>
</comment>
<comment type="caution">
    <text evidence="2">Was originally thought to originate from S.solfataricus strain P1, but the culture was contaminated with S.acidocaldarius.</text>
</comment>
<sequence>MEDFKYRNYYVLRVTGGQEINVALILEERIKTNNINEIFSVVVPPNIKGYVILEATGPHVVKLISSGIRHVKGVAHGLIQKEDVTKFVSKSVALPAVKEGDLVEVISGPFRGMQAQVVRVESTKNEVVLNILESSYPVQVTVPLEQVKPVKR</sequence>
<reference key="1">
    <citation type="journal article" date="1991" name="Mol. Microbiol.">
        <title>A gene in the archaebacterium Sulfolobus solfataricus that codes for a protein equivalent to the alpha subunits of the signal recognition particle receptor in eukaryotes.</title>
        <authorList>
            <person name="Ramirez C."/>
            <person name="Matheson A.T."/>
        </authorList>
    </citation>
    <scope>NUCLEOTIDE SEQUENCE [GENOMIC DNA]</scope>
</reference>
<reference key="2">
    <citation type="journal article" date="1995" name="Biochim. Biophys. Acta">
        <title>Nucleotide sequence of a gene cluster encoding ribosomal proteins in the thermoacidophilic crenarchaeon Sulfolobus acidocaldarius.</title>
        <authorList>
            <person name="Moll R."/>
            <person name="Schmidtke S."/>
            <person name="Schaefer G."/>
        </authorList>
    </citation>
    <scope>NUCLEOTIDE SEQUENCE [GENOMIC DNA]</scope>
    <source>
        <strain>ATCC 33909 / DSM 639 / JCM 8929 / NBRC 15157 / NCIMB 11770</strain>
    </source>
</reference>
<reference key="3">
    <citation type="journal article" date="2005" name="J. Bacteriol.">
        <title>The genome of Sulfolobus acidocaldarius, a model organism of the Crenarchaeota.</title>
        <authorList>
            <person name="Chen L."/>
            <person name="Bruegger K."/>
            <person name="Skovgaard M."/>
            <person name="Redder P."/>
            <person name="She Q."/>
            <person name="Torarinsson E."/>
            <person name="Greve B."/>
            <person name="Awayez M."/>
            <person name="Zibat A."/>
            <person name="Klenk H.-P."/>
            <person name="Garrett R.A."/>
        </authorList>
    </citation>
    <scope>NUCLEOTIDE SEQUENCE [LARGE SCALE GENOMIC DNA]</scope>
    <source>
        <strain>ATCC 33909 / DSM 639 / JCM 8929 / NBRC 15157 / NCIMB 11770</strain>
    </source>
</reference>
<reference key="4">
    <citation type="journal article" date="1995" name="Nucleic Acids Res.">
        <title>Novel protein families in archaean genomes.</title>
        <authorList>
            <person name="Ouzounis C."/>
            <person name="Kyrpides N."/>
            <person name="Sander C."/>
        </authorList>
    </citation>
    <scope>SIMILARITY</scope>
</reference>
<keyword id="KW-1185">Reference proteome</keyword>
<keyword id="KW-0804">Transcription</keyword>
<keyword id="KW-0805">Transcription regulation</keyword>
<accession>P27341</accession>
<accession>Q4J8U9</accession>